<name>DDB1B_ARATH</name>
<sequence length="1088" mass="121179">MSVWNYAVTAQKPTCVTHSCVGNFTSPQELNLIVAKSTRIEIHLLSPQGLQTILDVPLYGRIATMELFRPHGEAQDFLFVATERYKFCVLQWDYESSELITRAMGDVSDRIGRPTDNGQIGIIDPDCRVIGLHLYDGLFKVIPFDNKGQLKEAFNIRLEELQVLDIKFLYGCTKPTIAVLYQDNKDARHVKTYEVSLKDKNFVEGPWSQNNLDNGADLLIPVPSPLCGVLIIGEETIVYCSANAFKAIPIRPSITKAYGRVDLDGSRYLLGDHAGLIHLLVITHEKEKVTGLKIELLGETSIASSISYLDNAVVFVGSSYGDSQLIKLNLQPDAKGSYVEILEKYVNLGPIVDFCVVDLERQGQGQVVTCSGAYKDGSLRIVRNGIGINEQASVELQGIKGMWSLKSSIDEAFDTFLVVSFISETRILAMNIEDELEETEIEGFLSEVQTLFCHDAVYNQLVQVTSNSVRLVSSTTRELRNKWDAPAGFSVNVATANASQVLLATGGGHLVYLEIGDGTLTEVKHVLLEYEVSCLDINPIGDNPNYSQLAAVGMWTDISVRIFVLPDLTLITKEELGGEIIPRSVLLCAFEGISYLLCALGDGHLLNFQLDTSCGKLRDRKKVSLGTRPITLRTFSSKSATHVFAASDRPAVIYSNNKKLLYSNVNLKEVSHMCPFNSAAFPDSLAIAREGELTIGTIDDIQKLHIRTIPIGEHARRICHQEQTRTFAISCLRNEPSAEESESHFVRLLDAQSFEFLSSYPLDAFECGCSILSCSFTDDKNVYYCVGTAYVLPEENEPTKGRILVFIVEEGRLQLITEKETKGAVYSLNAFNGKLLASINQKIQLYKWMLRDDGTRELQSECGHHGHILALYVQTRGDFIAVGDLMKSISLLIYKHEEGAIEERARDYNANWMTAVEILNDDIYLGTDNCFNIFTVKKNNEGATDEERARMEVVGEYHIGEFVNRFRHGSLVMKLPDSDIGQIPTVIFGTVSGMIGVIASLPQEQYAFLEKLQTSLRKVIKGVGGLSHEQWRSFNNEKRTAEAKGYLDGDLIESFLDLSRGKMEEISKGMDVQVEELCKRVEELTRLH</sequence>
<proteinExistence type="evidence at protein level"/>
<accession>O49552</accession>
<accession>Q0WML4</accession>
<accession>Q570Q9</accession>
<protein>
    <recommendedName>
        <fullName evidence="5">DNA damage-binding protein 1b</fullName>
    </recommendedName>
    <alternativeName>
        <fullName evidence="5">UV-damaged DNA-binding protein 1b</fullName>
        <shortName evidence="5">DDB1b</shortName>
    </alternativeName>
</protein>
<comment type="function">
    <text evidence="1">Component of light signal transduction machinery. Involved in repression of photomorphogenesis in darkness (By similarity). Plays a role in DNA repair by forming with DDB2 the UV-damaged DNA-binding protein complex (UV-DDB) (By similarity).</text>
</comment>
<comment type="pathway">
    <text>Protein modification; protein ubiquitination.</text>
</comment>
<comment type="subunit">
    <text evidence="2 3 4">Interacts with DDA1 (PubMed:24563205). Binds to KTN80.2/DWA3 (PubMed:21421380). Interacts with HTD1 (PubMed:25358503).</text>
</comment>
<comment type="subcellular location">
    <subcellularLocation>
        <location evidence="1">Nucleus</location>
    </subcellularLocation>
</comment>
<comment type="similarity">
    <text evidence="6">Belongs to the DDB1 family.</text>
</comment>
<comment type="sequence caution" evidence="6">
    <conflict type="erroneous gene model prediction">
        <sequence resource="EMBL-CDS" id="CAA17529"/>
    </conflict>
</comment>
<comment type="sequence caution" evidence="6">
    <conflict type="erroneous gene model prediction">
        <sequence resource="EMBL-CDS" id="CAB79110"/>
    </conflict>
</comment>
<reference key="1">
    <citation type="journal article" date="1999" name="Nature">
        <title>Sequence and analysis of chromosome 4 of the plant Arabidopsis thaliana.</title>
        <authorList>
            <person name="Mayer K.F.X."/>
            <person name="Schueller C."/>
            <person name="Wambutt R."/>
            <person name="Murphy G."/>
            <person name="Volckaert G."/>
            <person name="Pohl T."/>
            <person name="Duesterhoeft A."/>
            <person name="Stiekema W."/>
            <person name="Entian K.-D."/>
            <person name="Terryn N."/>
            <person name="Harris B."/>
            <person name="Ansorge W."/>
            <person name="Brandt P."/>
            <person name="Grivell L.A."/>
            <person name="Rieger M."/>
            <person name="Weichselgartner M."/>
            <person name="de Simone V."/>
            <person name="Obermaier B."/>
            <person name="Mache R."/>
            <person name="Mueller M."/>
            <person name="Kreis M."/>
            <person name="Delseny M."/>
            <person name="Puigdomenech P."/>
            <person name="Watson M."/>
            <person name="Schmidtheini T."/>
            <person name="Reichert B."/>
            <person name="Portetelle D."/>
            <person name="Perez-Alonso M."/>
            <person name="Boutry M."/>
            <person name="Bancroft I."/>
            <person name="Vos P."/>
            <person name="Hoheisel J."/>
            <person name="Zimmermann W."/>
            <person name="Wedler H."/>
            <person name="Ridley P."/>
            <person name="Langham S.-A."/>
            <person name="McCullagh B."/>
            <person name="Bilham L."/>
            <person name="Robben J."/>
            <person name="van der Schueren J."/>
            <person name="Grymonprez B."/>
            <person name="Chuang Y.-J."/>
            <person name="Vandenbussche F."/>
            <person name="Braeken M."/>
            <person name="Weltjens I."/>
            <person name="Voet M."/>
            <person name="Bastiaens I."/>
            <person name="Aert R."/>
            <person name="Defoor E."/>
            <person name="Weitzenegger T."/>
            <person name="Bothe G."/>
            <person name="Ramsperger U."/>
            <person name="Hilbert H."/>
            <person name="Braun M."/>
            <person name="Holzer E."/>
            <person name="Brandt A."/>
            <person name="Peters S."/>
            <person name="van Staveren M."/>
            <person name="Dirkse W."/>
            <person name="Mooijman P."/>
            <person name="Klein Lankhorst R."/>
            <person name="Rose M."/>
            <person name="Hauf J."/>
            <person name="Koetter P."/>
            <person name="Berneiser S."/>
            <person name="Hempel S."/>
            <person name="Feldpausch M."/>
            <person name="Lamberth S."/>
            <person name="Van den Daele H."/>
            <person name="De Keyser A."/>
            <person name="Buysshaert C."/>
            <person name="Gielen J."/>
            <person name="Villarroel R."/>
            <person name="De Clercq R."/>
            <person name="van Montagu M."/>
            <person name="Rogers J."/>
            <person name="Cronin A."/>
            <person name="Quail M.A."/>
            <person name="Bray-Allen S."/>
            <person name="Clark L."/>
            <person name="Doggett J."/>
            <person name="Hall S."/>
            <person name="Kay M."/>
            <person name="Lennard N."/>
            <person name="McLay K."/>
            <person name="Mayes R."/>
            <person name="Pettett A."/>
            <person name="Rajandream M.A."/>
            <person name="Lyne M."/>
            <person name="Benes V."/>
            <person name="Rechmann S."/>
            <person name="Borkova D."/>
            <person name="Bloecker H."/>
            <person name="Scharfe M."/>
            <person name="Grimm M."/>
            <person name="Loehnert T.-H."/>
            <person name="Dose S."/>
            <person name="de Haan M."/>
            <person name="Maarse A.C."/>
            <person name="Schaefer M."/>
            <person name="Mueller-Auer S."/>
            <person name="Gabel C."/>
            <person name="Fuchs M."/>
            <person name="Fartmann B."/>
            <person name="Granderath K."/>
            <person name="Dauner D."/>
            <person name="Herzl A."/>
            <person name="Neumann S."/>
            <person name="Argiriou A."/>
            <person name="Vitale D."/>
            <person name="Liguori R."/>
            <person name="Piravandi E."/>
            <person name="Massenet O."/>
            <person name="Quigley F."/>
            <person name="Clabauld G."/>
            <person name="Muendlein A."/>
            <person name="Felber R."/>
            <person name="Schnabl S."/>
            <person name="Hiller R."/>
            <person name="Schmidt W."/>
            <person name="Lecharny A."/>
            <person name="Aubourg S."/>
            <person name="Chefdor F."/>
            <person name="Cooke R."/>
            <person name="Berger C."/>
            <person name="Monfort A."/>
            <person name="Casacuberta E."/>
            <person name="Gibbons T."/>
            <person name="Weber N."/>
            <person name="Vandenbol M."/>
            <person name="Bargues M."/>
            <person name="Terol J."/>
            <person name="Torres A."/>
            <person name="Perez-Perez A."/>
            <person name="Purnelle B."/>
            <person name="Bent E."/>
            <person name="Johnson S."/>
            <person name="Tacon D."/>
            <person name="Jesse T."/>
            <person name="Heijnen L."/>
            <person name="Schwarz S."/>
            <person name="Scholler P."/>
            <person name="Heber S."/>
            <person name="Francs P."/>
            <person name="Bielke C."/>
            <person name="Frishman D."/>
            <person name="Haase D."/>
            <person name="Lemcke K."/>
            <person name="Mewes H.-W."/>
            <person name="Stocker S."/>
            <person name="Zaccaria P."/>
            <person name="Bevan M."/>
            <person name="Wilson R.K."/>
            <person name="de la Bastide M."/>
            <person name="Habermann K."/>
            <person name="Parnell L."/>
            <person name="Dedhia N."/>
            <person name="Gnoj L."/>
            <person name="Schutz K."/>
            <person name="Huang E."/>
            <person name="Spiegel L."/>
            <person name="Sekhon M."/>
            <person name="Murray J."/>
            <person name="Sheet P."/>
            <person name="Cordes M."/>
            <person name="Abu-Threideh J."/>
            <person name="Stoneking T."/>
            <person name="Kalicki J."/>
            <person name="Graves T."/>
            <person name="Harmon G."/>
            <person name="Edwards J."/>
            <person name="Latreille P."/>
            <person name="Courtney L."/>
            <person name="Cloud J."/>
            <person name="Abbott A."/>
            <person name="Scott K."/>
            <person name="Johnson D."/>
            <person name="Minx P."/>
            <person name="Bentley D."/>
            <person name="Fulton B."/>
            <person name="Miller N."/>
            <person name="Greco T."/>
            <person name="Kemp K."/>
            <person name="Kramer J."/>
            <person name="Fulton L."/>
            <person name="Mardis E."/>
            <person name="Dante M."/>
            <person name="Pepin K."/>
            <person name="Hillier L.W."/>
            <person name="Nelson J."/>
            <person name="Spieth J."/>
            <person name="Ryan E."/>
            <person name="Andrews S."/>
            <person name="Geisel C."/>
            <person name="Layman D."/>
            <person name="Du H."/>
            <person name="Ali J."/>
            <person name="Berghoff A."/>
            <person name="Jones K."/>
            <person name="Drone K."/>
            <person name="Cotton M."/>
            <person name="Joshu C."/>
            <person name="Antonoiu B."/>
            <person name="Zidanic M."/>
            <person name="Strong C."/>
            <person name="Sun H."/>
            <person name="Lamar B."/>
            <person name="Yordan C."/>
            <person name="Ma P."/>
            <person name="Zhong J."/>
            <person name="Preston R."/>
            <person name="Vil D."/>
            <person name="Shekher M."/>
            <person name="Matero A."/>
            <person name="Shah R."/>
            <person name="Swaby I.K."/>
            <person name="O'Shaughnessy A."/>
            <person name="Rodriguez M."/>
            <person name="Hoffman J."/>
            <person name="Till S."/>
            <person name="Granat S."/>
            <person name="Shohdy N."/>
            <person name="Hasegawa A."/>
            <person name="Hameed A."/>
            <person name="Lodhi M."/>
            <person name="Johnson A."/>
            <person name="Chen E."/>
            <person name="Marra M.A."/>
            <person name="Martienssen R."/>
            <person name="McCombie W.R."/>
        </authorList>
    </citation>
    <scope>NUCLEOTIDE SEQUENCE [LARGE SCALE GENOMIC DNA]</scope>
    <source>
        <strain>cv. Columbia</strain>
    </source>
</reference>
<reference key="2">
    <citation type="journal article" date="2017" name="Plant J.">
        <title>Araport11: a complete reannotation of the Arabidopsis thaliana reference genome.</title>
        <authorList>
            <person name="Cheng C.Y."/>
            <person name="Krishnakumar V."/>
            <person name="Chan A.P."/>
            <person name="Thibaud-Nissen F."/>
            <person name="Schobel S."/>
            <person name="Town C.D."/>
        </authorList>
    </citation>
    <scope>GENOME REANNOTATION</scope>
    <source>
        <strain>cv. Columbia</strain>
    </source>
</reference>
<reference key="3">
    <citation type="submission" date="2006-07" db="EMBL/GenBank/DDBJ databases">
        <title>Large-scale analysis of RIKEN Arabidopsis full-length (RAFL) cDNAs.</title>
        <authorList>
            <person name="Totoki Y."/>
            <person name="Seki M."/>
            <person name="Ishida J."/>
            <person name="Nakajima M."/>
            <person name="Enju A."/>
            <person name="Kamiya A."/>
            <person name="Narusaka M."/>
            <person name="Shin-i T."/>
            <person name="Nakagawa M."/>
            <person name="Sakamoto N."/>
            <person name="Oishi K."/>
            <person name="Kohara Y."/>
            <person name="Kobayashi M."/>
            <person name="Toyoda A."/>
            <person name="Sakaki Y."/>
            <person name="Sakurai T."/>
            <person name="Iida K."/>
            <person name="Akiyama K."/>
            <person name="Satou M."/>
            <person name="Toyoda T."/>
            <person name="Konagaya A."/>
            <person name="Carninci P."/>
            <person name="Kawai J."/>
            <person name="Hayashizaki Y."/>
            <person name="Shinozaki K."/>
        </authorList>
    </citation>
    <scope>NUCLEOTIDE SEQUENCE [LARGE SCALE MRNA]</scope>
    <source>
        <strain>cv. Columbia</strain>
    </source>
</reference>
<reference key="4">
    <citation type="journal article" date="2002" name="Curr. Biol.">
        <title>De-etiolated 1 and damaged DNA binding protein 1 interact to regulate Arabidopsis photomorphogenesis.</title>
        <authorList>
            <person name="Schroeder D.F."/>
            <person name="Gahrtz M."/>
            <person name="Maxwell B.B."/>
            <person name="Cook R.K."/>
            <person name="Kan J.M."/>
            <person name="Alonso J.M."/>
            <person name="Ecker J.R."/>
            <person name="Chory J."/>
        </authorList>
    </citation>
    <scope>IDENTIFICATION</scope>
    <scope>POSSIBLE FUNCTION</scope>
</reference>
<reference key="5">
    <citation type="journal article" date="2011" name="Plant Sci.">
        <title>DWA3, an Arabidopsis DWD protein, acts as a negative regulator in ABA signal transduction.</title>
        <authorList>
            <person name="Lee J.-H."/>
            <person name="Terzaghi W."/>
            <person name="Deng X.W."/>
        </authorList>
    </citation>
    <scope>INTERACTION WITH KTN80.2/DWA3</scope>
    <source>
        <strain>cv. Columbia</strain>
    </source>
</reference>
<reference key="6">
    <citation type="journal article" date="2014" name="Mol. Cells">
        <title>Characterization of a novel DWD protein that participates in heat stress response in Arabidopsis.</title>
        <authorList>
            <person name="Kim S.-H."/>
            <person name="Lee J.-H."/>
            <person name="Seo K.-I."/>
            <person name="Ryu B."/>
            <person name="Sung Y."/>
            <person name="Chung T."/>
            <person name="Deng X.W."/>
            <person name="Lee J.-H."/>
        </authorList>
    </citation>
    <scope>INTERACTION WITH HTD1</scope>
</reference>
<reference key="7">
    <citation type="journal article" date="2014" name="Plant Cell">
        <title>Targeted degradation of abscisic acid receptors is mediated by the ubiquitin ligase substrate adaptor DDA1 in Arabidopsis.</title>
        <authorList>
            <person name="Irigoyen M.L."/>
            <person name="Iniesto E."/>
            <person name="Rodriguez L."/>
            <person name="Puga M.I."/>
            <person name="Yanagawa Y."/>
            <person name="Pick E."/>
            <person name="Strickland E."/>
            <person name="Paz-Ares J."/>
            <person name="Wei N."/>
            <person name="De Jaeger G."/>
            <person name="Rodriguez P.L."/>
            <person name="Deng X.W."/>
            <person name="Rubio V."/>
        </authorList>
    </citation>
    <scope>INTERACTION WITH DDA1</scope>
</reference>
<gene>
    <name evidence="5" type="primary">DDB1B</name>
    <name evidence="7" type="ordered locus">At4g21100</name>
    <name evidence="8" type="ORF">F7J7.40</name>
</gene>
<organism>
    <name type="scientific">Arabidopsis thaliana</name>
    <name type="common">Mouse-ear cress</name>
    <dbReference type="NCBI Taxonomy" id="3702"/>
    <lineage>
        <taxon>Eukaryota</taxon>
        <taxon>Viridiplantae</taxon>
        <taxon>Streptophyta</taxon>
        <taxon>Embryophyta</taxon>
        <taxon>Tracheophyta</taxon>
        <taxon>Spermatophyta</taxon>
        <taxon>Magnoliopsida</taxon>
        <taxon>eudicotyledons</taxon>
        <taxon>Gunneridae</taxon>
        <taxon>Pentapetalae</taxon>
        <taxon>rosids</taxon>
        <taxon>malvids</taxon>
        <taxon>Brassicales</taxon>
        <taxon>Brassicaceae</taxon>
        <taxon>Camelineae</taxon>
        <taxon>Arabidopsis</taxon>
    </lineage>
</organism>
<feature type="chain" id="PRO_0000079838" description="DNA damage-binding protein 1b">
    <location>
        <begin position="1"/>
        <end position="1088"/>
    </location>
</feature>
<feature type="sequence conflict" description="In Ref. 3; BAD95136." evidence="6" ref="3">
    <original>N</original>
    <variation>S</variation>
    <location>
        <position position="666"/>
    </location>
</feature>
<feature type="sequence conflict" description="In Ref. 3; BAD95136." evidence="6" ref="3">
    <original>T</original>
    <variation>A</variation>
    <location>
        <position position="914"/>
    </location>
</feature>
<evidence type="ECO:0000250" key="1"/>
<evidence type="ECO:0000269" key="2">
    <source>
    </source>
</evidence>
<evidence type="ECO:0000269" key="3">
    <source>
    </source>
</evidence>
<evidence type="ECO:0000269" key="4">
    <source>
    </source>
</evidence>
<evidence type="ECO:0000303" key="5">
    <source>
    </source>
</evidence>
<evidence type="ECO:0000305" key="6"/>
<evidence type="ECO:0000312" key="7">
    <source>
        <dbReference type="Araport" id="AT4G21100"/>
    </source>
</evidence>
<evidence type="ECO:0000312" key="8">
    <source>
        <dbReference type="EMBL" id="CAA17529.1"/>
    </source>
</evidence>
<dbReference type="EMBL" id="AL021960">
    <property type="protein sequence ID" value="CAA17529.1"/>
    <property type="status" value="ALT_SEQ"/>
    <property type="molecule type" value="Genomic_DNA"/>
</dbReference>
<dbReference type="EMBL" id="AL161554">
    <property type="protein sequence ID" value="CAB79110.1"/>
    <property type="status" value="ALT_SEQ"/>
    <property type="molecule type" value="Genomic_DNA"/>
</dbReference>
<dbReference type="EMBL" id="CP002687">
    <property type="protein sequence ID" value="AEE84401.1"/>
    <property type="molecule type" value="Genomic_DNA"/>
</dbReference>
<dbReference type="EMBL" id="AK220648">
    <property type="protein sequence ID" value="BAD95136.1"/>
    <property type="molecule type" value="mRNA"/>
</dbReference>
<dbReference type="EMBL" id="AK229805">
    <property type="protein sequence ID" value="BAF01636.1"/>
    <property type="molecule type" value="mRNA"/>
</dbReference>
<dbReference type="PIR" id="T04941">
    <property type="entry name" value="T04941"/>
</dbReference>
<dbReference type="RefSeq" id="NP_193842.1">
    <property type="nucleotide sequence ID" value="NM_118228.4"/>
</dbReference>
<dbReference type="SMR" id="O49552"/>
<dbReference type="BioGRID" id="13148">
    <property type="interactions" value="55"/>
</dbReference>
<dbReference type="DIP" id="DIP-46981N"/>
<dbReference type="FunCoup" id="O49552">
    <property type="interactions" value="4900"/>
</dbReference>
<dbReference type="IntAct" id="O49552">
    <property type="interactions" value="2"/>
</dbReference>
<dbReference type="STRING" id="3702.O49552"/>
<dbReference type="PaxDb" id="3702-AT4G21100.1"/>
<dbReference type="ProteomicsDB" id="224662"/>
<dbReference type="EnsemblPlants" id="AT4G21100.1">
    <property type="protein sequence ID" value="AT4G21100.1"/>
    <property type="gene ID" value="AT4G21100"/>
</dbReference>
<dbReference type="GeneID" id="827857"/>
<dbReference type="Gramene" id="AT4G21100.1">
    <property type="protein sequence ID" value="AT4G21100.1"/>
    <property type="gene ID" value="AT4G21100"/>
</dbReference>
<dbReference type="KEGG" id="ath:AT4G21100"/>
<dbReference type="Araport" id="AT4G21100"/>
<dbReference type="TAIR" id="AT4G21100">
    <property type="gene designation" value="DDB1B"/>
</dbReference>
<dbReference type="eggNOG" id="KOG1897">
    <property type="taxonomic scope" value="Eukaryota"/>
</dbReference>
<dbReference type="HOGENOM" id="CLU_002893_0_1_1"/>
<dbReference type="InParanoid" id="O49552"/>
<dbReference type="OMA" id="ITTRIDI"/>
<dbReference type="PhylomeDB" id="O49552"/>
<dbReference type="UniPathway" id="UPA00143"/>
<dbReference type="PRO" id="PR:O49552"/>
<dbReference type="Proteomes" id="UP000006548">
    <property type="component" value="Chromosome 4"/>
</dbReference>
<dbReference type="ExpressionAtlas" id="O49552">
    <property type="expression patterns" value="baseline and differential"/>
</dbReference>
<dbReference type="GO" id="GO:0005829">
    <property type="term" value="C:cytosol"/>
    <property type="evidence" value="ECO:0007005"/>
    <property type="project" value="TAIR"/>
</dbReference>
<dbReference type="GO" id="GO:0005634">
    <property type="term" value="C:nucleus"/>
    <property type="evidence" value="ECO:0000314"/>
    <property type="project" value="TAIR"/>
</dbReference>
<dbReference type="GO" id="GO:0003677">
    <property type="term" value="F:DNA binding"/>
    <property type="evidence" value="ECO:0007669"/>
    <property type="project" value="UniProtKB-KW"/>
</dbReference>
<dbReference type="GO" id="GO:0006281">
    <property type="term" value="P:DNA repair"/>
    <property type="evidence" value="ECO:0007669"/>
    <property type="project" value="UniProtKB-KW"/>
</dbReference>
<dbReference type="GO" id="GO:0009793">
    <property type="term" value="P:embryo development ending in seed dormancy"/>
    <property type="evidence" value="ECO:0000315"/>
    <property type="project" value="TAIR"/>
</dbReference>
<dbReference type="GO" id="GO:0016567">
    <property type="term" value="P:protein ubiquitination"/>
    <property type="evidence" value="ECO:0007669"/>
    <property type="project" value="UniProtKB-UniPathway"/>
</dbReference>
<dbReference type="GO" id="GO:0009585">
    <property type="term" value="P:red, far-red light phototransduction"/>
    <property type="evidence" value="ECO:0007669"/>
    <property type="project" value="UniProtKB-KW"/>
</dbReference>
<dbReference type="FunFam" id="1.10.150.910:FF:000003">
    <property type="entry name" value="DNA damage-binding protein 1a"/>
    <property type="match status" value="1"/>
</dbReference>
<dbReference type="FunFam" id="2.130.10.10:FF:000182">
    <property type="entry name" value="DNA damage-binding protein 1a"/>
    <property type="match status" value="1"/>
</dbReference>
<dbReference type="FunFam" id="2.130.10.10:FF:000267">
    <property type="entry name" value="DNA damage-binding protein 1a"/>
    <property type="match status" value="1"/>
</dbReference>
<dbReference type="Gene3D" id="1.10.150.910">
    <property type="match status" value="1"/>
</dbReference>
<dbReference type="Gene3D" id="2.130.10.10">
    <property type="entry name" value="YVTN repeat-like/Quinoprotein amine dehydrogenase"/>
    <property type="match status" value="3"/>
</dbReference>
<dbReference type="InterPro" id="IPR018846">
    <property type="entry name" value="Beta-prop_RSE1/DDB1/CPSF1_1st"/>
</dbReference>
<dbReference type="InterPro" id="IPR004871">
    <property type="entry name" value="Cleavage/polyA-sp_fac_asu_C"/>
</dbReference>
<dbReference type="InterPro" id="IPR050358">
    <property type="entry name" value="RSE1/DDB1/CFT1/CPSF1"/>
</dbReference>
<dbReference type="InterPro" id="IPR015943">
    <property type="entry name" value="WD40/YVTN_repeat-like_dom_sf"/>
</dbReference>
<dbReference type="InterPro" id="IPR036322">
    <property type="entry name" value="WD40_repeat_dom_sf"/>
</dbReference>
<dbReference type="PANTHER" id="PTHR10644">
    <property type="entry name" value="DNA REPAIR/RNA PROCESSING CPSF FAMILY"/>
    <property type="match status" value="1"/>
</dbReference>
<dbReference type="Pfam" id="PF10433">
    <property type="entry name" value="Beta-prop_RSE1_1st"/>
    <property type="match status" value="1"/>
</dbReference>
<dbReference type="Pfam" id="PF23726">
    <property type="entry name" value="Beta-prop_RSE1_2nd"/>
    <property type="match status" value="1"/>
</dbReference>
<dbReference type="Pfam" id="PF03178">
    <property type="entry name" value="CPSF_A"/>
    <property type="match status" value="1"/>
</dbReference>
<dbReference type="SUPFAM" id="SSF50978">
    <property type="entry name" value="WD40 repeat-like"/>
    <property type="match status" value="2"/>
</dbReference>
<keyword id="KW-0227">DNA damage</keyword>
<keyword id="KW-0234">DNA repair</keyword>
<keyword id="KW-0238">DNA-binding</keyword>
<keyword id="KW-0539">Nucleus</keyword>
<keyword id="KW-0607">Phytochrome signaling pathway</keyword>
<keyword id="KW-1185">Reference proteome</keyword>